<protein>
    <recommendedName>
        <fullName>Solute carrier family 25 member 48</fullName>
    </recommendedName>
</protein>
<reference key="1">
    <citation type="journal article" date="2004" name="Nat. Genet.">
        <title>Complete sequencing and characterization of 21,243 full-length human cDNAs.</title>
        <authorList>
            <person name="Ota T."/>
            <person name="Suzuki Y."/>
            <person name="Nishikawa T."/>
            <person name="Otsuki T."/>
            <person name="Sugiyama T."/>
            <person name="Irie R."/>
            <person name="Wakamatsu A."/>
            <person name="Hayashi K."/>
            <person name="Sato H."/>
            <person name="Nagai K."/>
            <person name="Kimura K."/>
            <person name="Makita H."/>
            <person name="Sekine M."/>
            <person name="Obayashi M."/>
            <person name="Nishi T."/>
            <person name="Shibahara T."/>
            <person name="Tanaka T."/>
            <person name="Ishii S."/>
            <person name="Yamamoto J."/>
            <person name="Saito K."/>
            <person name="Kawai Y."/>
            <person name="Isono Y."/>
            <person name="Nakamura Y."/>
            <person name="Nagahari K."/>
            <person name="Murakami K."/>
            <person name="Yasuda T."/>
            <person name="Iwayanagi T."/>
            <person name="Wagatsuma M."/>
            <person name="Shiratori A."/>
            <person name="Sudo H."/>
            <person name="Hosoiri T."/>
            <person name="Kaku Y."/>
            <person name="Kodaira H."/>
            <person name="Kondo H."/>
            <person name="Sugawara M."/>
            <person name="Takahashi M."/>
            <person name="Kanda K."/>
            <person name="Yokoi T."/>
            <person name="Furuya T."/>
            <person name="Kikkawa E."/>
            <person name="Omura Y."/>
            <person name="Abe K."/>
            <person name="Kamihara K."/>
            <person name="Katsuta N."/>
            <person name="Sato K."/>
            <person name="Tanikawa M."/>
            <person name="Yamazaki M."/>
            <person name="Ninomiya K."/>
            <person name="Ishibashi T."/>
            <person name="Yamashita H."/>
            <person name="Murakawa K."/>
            <person name="Fujimori K."/>
            <person name="Tanai H."/>
            <person name="Kimata M."/>
            <person name="Watanabe M."/>
            <person name="Hiraoka S."/>
            <person name="Chiba Y."/>
            <person name="Ishida S."/>
            <person name="Ono Y."/>
            <person name="Takiguchi S."/>
            <person name="Watanabe S."/>
            <person name="Yosida M."/>
            <person name="Hotuta T."/>
            <person name="Kusano J."/>
            <person name="Kanehori K."/>
            <person name="Takahashi-Fujii A."/>
            <person name="Hara H."/>
            <person name="Tanase T.-O."/>
            <person name="Nomura Y."/>
            <person name="Togiya S."/>
            <person name="Komai F."/>
            <person name="Hara R."/>
            <person name="Takeuchi K."/>
            <person name="Arita M."/>
            <person name="Imose N."/>
            <person name="Musashino K."/>
            <person name="Yuuki H."/>
            <person name="Oshima A."/>
            <person name="Sasaki N."/>
            <person name="Aotsuka S."/>
            <person name="Yoshikawa Y."/>
            <person name="Matsunawa H."/>
            <person name="Ichihara T."/>
            <person name="Shiohata N."/>
            <person name="Sano S."/>
            <person name="Moriya S."/>
            <person name="Momiyama H."/>
            <person name="Satoh N."/>
            <person name="Takami S."/>
            <person name="Terashima Y."/>
            <person name="Suzuki O."/>
            <person name="Nakagawa S."/>
            <person name="Senoh A."/>
            <person name="Mizoguchi H."/>
            <person name="Goto Y."/>
            <person name="Shimizu F."/>
            <person name="Wakebe H."/>
            <person name="Hishigaki H."/>
            <person name="Watanabe T."/>
            <person name="Sugiyama A."/>
            <person name="Takemoto M."/>
            <person name="Kawakami B."/>
            <person name="Yamazaki M."/>
            <person name="Watanabe K."/>
            <person name="Kumagai A."/>
            <person name="Itakura S."/>
            <person name="Fukuzumi Y."/>
            <person name="Fujimori Y."/>
            <person name="Komiyama M."/>
            <person name="Tashiro H."/>
            <person name="Tanigami A."/>
            <person name="Fujiwara T."/>
            <person name="Ono T."/>
            <person name="Yamada K."/>
            <person name="Fujii Y."/>
            <person name="Ozaki K."/>
            <person name="Hirao M."/>
            <person name="Ohmori Y."/>
            <person name="Kawabata A."/>
            <person name="Hikiji T."/>
            <person name="Kobatake N."/>
            <person name="Inagaki H."/>
            <person name="Ikema Y."/>
            <person name="Okamoto S."/>
            <person name="Okitani R."/>
            <person name="Kawakami T."/>
            <person name="Noguchi S."/>
            <person name="Itoh T."/>
            <person name="Shigeta K."/>
            <person name="Senba T."/>
            <person name="Matsumura K."/>
            <person name="Nakajima Y."/>
            <person name="Mizuno T."/>
            <person name="Morinaga M."/>
            <person name="Sasaki M."/>
            <person name="Togashi T."/>
            <person name="Oyama M."/>
            <person name="Hata H."/>
            <person name="Watanabe M."/>
            <person name="Komatsu T."/>
            <person name="Mizushima-Sugano J."/>
            <person name="Satoh T."/>
            <person name="Shirai Y."/>
            <person name="Takahashi Y."/>
            <person name="Nakagawa K."/>
            <person name="Okumura K."/>
            <person name="Nagase T."/>
            <person name="Nomura N."/>
            <person name="Kikuchi H."/>
            <person name="Masuho Y."/>
            <person name="Yamashita R."/>
            <person name="Nakai K."/>
            <person name="Yada T."/>
            <person name="Nakamura Y."/>
            <person name="Ohara O."/>
            <person name="Isogai T."/>
            <person name="Sugano S."/>
        </authorList>
    </citation>
    <scope>NUCLEOTIDE SEQUENCE [LARGE SCALE MRNA] (ISOFORM 2)</scope>
    <source>
        <tissue>Brain cortex</tissue>
    </source>
</reference>
<reference key="2">
    <citation type="journal article" date="2004" name="Nature">
        <title>The DNA sequence and comparative analysis of human chromosome 5.</title>
        <authorList>
            <person name="Schmutz J."/>
            <person name="Martin J."/>
            <person name="Terry A."/>
            <person name="Couronne O."/>
            <person name="Grimwood J."/>
            <person name="Lowry S."/>
            <person name="Gordon L.A."/>
            <person name="Scott D."/>
            <person name="Xie G."/>
            <person name="Huang W."/>
            <person name="Hellsten U."/>
            <person name="Tran-Gyamfi M."/>
            <person name="She X."/>
            <person name="Prabhakar S."/>
            <person name="Aerts A."/>
            <person name="Altherr M."/>
            <person name="Bajorek E."/>
            <person name="Black S."/>
            <person name="Branscomb E."/>
            <person name="Caoile C."/>
            <person name="Challacombe J.F."/>
            <person name="Chan Y.M."/>
            <person name="Denys M."/>
            <person name="Detter J.C."/>
            <person name="Escobar J."/>
            <person name="Flowers D."/>
            <person name="Fotopulos D."/>
            <person name="Glavina T."/>
            <person name="Gomez M."/>
            <person name="Gonzales E."/>
            <person name="Goodstein D."/>
            <person name="Grigoriev I."/>
            <person name="Groza M."/>
            <person name="Hammon N."/>
            <person name="Hawkins T."/>
            <person name="Haydu L."/>
            <person name="Israni S."/>
            <person name="Jett J."/>
            <person name="Kadner K."/>
            <person name="Kimball H."/>
            <person name="Kobayashi A."/>
            <person name="Lopez F."/>
            <person name="Lou Y."/>
            <person name="Martinez D."/>
            <person name="Medina C."/>
            <person name="Morgan J."/>
            <person name="Nandkeshwar R."/>
            <person name="Noonan J.P."/>
            <person name="Pitluck S."/>
            <person name="Pollard M."/>
            <person name="Predki P."/>
            <person name="Priest J."/>
            <person name="Ramirez L."/>
            <person name="Retterer J."/>
            <person name="Rodriguez A."/>
            <person name="Rogers S."/>
            <person name="Salamov A."/>
            <person name="Salazar A."/>
            <person name="Thayer N."/>
            <person name="Tice H."/>
            <person name="Tsai M."/>
            <person name="Ustaszewska A."/>
            <person name="Vo N."/>
            <person name="Wheeler J."/>
            <person name="Wu K."/>
            <person name="Yang J."/>
            <person name="Dickson M."/>
            <person name="Cheng J.-F."/>
            <person name="Eichler E.E."/>
            <person name="Olsen A."/>
            <person name="Pennacchio L.A."/>
            <person name="Rokhsar D.S."/>
            <person name="Richardson P."/>
            <person name="Lucas S.M."/>
            <person name="Myers R.M."/>
            <person name="Rubin E.M."/>
        </authorList>
    </citation>
    <scope>NUCLEOTIDE SEQUENCE [LARGE SCALE GENOMIC DNA]</scope>
</reference>
<reference key="3">
    <citation type="submission" date="2005-09" db="EMBL/GenBank/DDBJ databases">
        <authorList>
            <person name="Mural R.J."/>
            <person name="Istrail S."/>
            <person name="Sutton G.G."/>
            <person name="Florea L."/>
            <person name="Halpern A.L."/>
            <person name="Mobarry C.M."/>
            <person name="Lippert R."/>
            <person name="Walenz B."/>
            <person name="Shatkay H."/>
            <person name="Dew I."/>
            <person name="Miller J.R."/>
            <person name="Flanigan M.J."/>
            <person name="Edwards N.J."/>
            <person name="Bolanos R."/>
            <person name="Fasulo D."/>
            <person name="Halldorsson B.V."/>
            <person name="Hannenhalli S."/>
            <person name="Turner R."/>
            <person name="Yooseph S."/>
            <person name="Lu F."/>
            <person name="Nusskern D.R."/>
            <person name="Shue B.C."/>
            <person name="Zheng X.H."/>
            <person name="Zhong F."/>
            <person name="Delcher A.L."/>
            <person name="Huson D.H."/>
            <person name="Kravitz S.A."/>
            <person name="Mouchard L."/>
            <person name="Reinert K."/>
            <person name="Remington K.A."/>
            <person name="Clark A.G."/>
            <person name="Waterman M.S."/>
            <person name="Eichler E.E."/>
            <person name="Adams M.D."/>
            <person name="Hunkapiller M.W."/>
            <person name="Myers E.W."/>
            <person name="Venter J.C."/>
        </authorList>
    </citation>
    <scope>NUCLEOTIDE SEQUENCE [LARGE SCALE GENOMIC DNA]</scope>
</reference>
<reference key="4">
    <citation type="journal article" date="2004" name="Genome Res.">
        <title>The status, quality, and expansion of the NIH full-length cDNA project: the Mammalian Gene Collection (MGC).</title>
        <authorList>
            <consortium name="The MGC Project Team"/>
        </authorList>
    </citation>
    <scope>NUCLEOTIDE SEQUENCE [LARGE SCALE MRNA] (ISOFORM 3)</scope>
    <source>
        <tissue>Brain</tissue>
    </source>
</reference>
<gene>
    <name type="primary">SLC25A48</name>
</gene>
<name>S2548_HUMAN</name>
<accession>Q6ZT89</accession>
<accession>Q8TAV9</accession>
<comment type="interaction">
    <interactant intactId="EBI-10255185">
        <id>Q6ZT89</id>
    </interactant>
    <interactant intactId="EBI-10172290">
        <id>P60409</id>
        <label>KRTAP10-7</label>
    </interactant>
    <organismsDiffer>false</organismsDiffer>
    <experiments>3</experiments>
</comment>
<comment type="interaction">
    <interactant intactId="EBI-10255185">
        <id>Q6ZT89</id>
    </interactant>
    <interactant intactId="EBI-10172526">
        <id>Q9UJV3-2</id>
        <label>MID2</label>
    </interactant>
    <organismsDiffer>false</organismsDiffer>
    <experiments>3</experiments>
</comment>
<comment type="interaction">
    <interactant intactId="EBI-10255185">
        <id>Q6ZT89</id>
    </interactant>
    <interactant intactId="EBI-302345">
        <id>Q8ND90</id>
        <label>PNMA1</label>
    </interactant>
    <organismsDiffer>false</organismsDiffer>
    <experiments>3</experiments>
</comment>
<comment type="interaction">
    <interactant intactId="EBI-10255185">
        <id>Q6ZT89</id>
    </interactant>
    <interactant intactId="EBI-359224">
        <id>Q13077</id>
        <label>TRAF1</label>
    </interactant>
    <organismsDiffer>false</organismsDiffer>
    <experiments>3</experiments>
</comment>
<comment type="interaction">
    <interactant intactId="EBI-10255185">
        <id>Q6ZT89</id>
    </interactant>
    <interactant intactId="EBI-1380492">
        <id>Q8TF42</id>
        <label>UBASH3B</label>
    </interactant>
    <organismsDiffer>false</organismsDiffer>
    <experiments>3</experiments>
</comment>
<comment type="interaction">
    <interactant intactId="EBI-12065614">
        <id>Q6ZT89-3</id>
    </interactant>
    <interactant intactId="EBI-11954292">
        <id>Q86V38</id>
        <label>ATN1</label>
    </interactant>
    <organismsDiffer>false</organismsDiffer>
    <experiments>3</experiments>
</comment>
<comment type="interaction">
    <interactant intactId="EBI-12065614">
        <id>Q6ZT89-3</id>
    </interactant>
    <interactant intactId="EBI-10961624">
        <id>Q2TAC2-2</id>
        <label>CCDC57</label>
    </interactant>
    <organismsDiffer>false</organismsDiffer>
    <experiments>3</experiments>
</comment>
<comment type="interaction">
    <interactant intactId="EBI-12065614">
        <id>Q6ZT89-3</id>
    </interactant>
    <interactant intactId="EBI-3867333">
        <id>A8MQ03</id>
        <label>CYSRT1</label>
    </interactant>
    <organismsDiffer>false</organismsDiffer>
    <experiments>3</experiments>
</comment>
<comment type="interaction">
    <interactant intactId="EBI-12065614">
        <id>Q6ZT89-3</id>
    </interactant>
    <interactant intactId="EBI-743414">
        <id>O95967</id>
        <label>EFEMP2</label>
    </interactant>
    <organismsDiffer>false</organismsDiffer>
    <experiments>3</experiments>
</comment>
<comment type="interaction">
    <interactant intactId="EBI-12065614">
        <id>Q6ZT89-3</id>
    </interactant>
    <interactant intactId="EBI-11978177">
        <id>Q96NT3-2</id>
        <label>GUCD1</label>
    </interactant>
    <organismsDiffer>false</organismsDiffer>
    <experiments>3</experiments>
</comment>
<comment type="interaction">
    <interactant intactId="EBI-12065614">
        <id>Q6ZT89-3</id>
    </interactant>
    <interactant intactId="EBI-10172526">
        <id>Q9UJV3-2</id>
        <label>MID2</label>
    </interactant>
    <organismsDiffer>false</organismsDiffer>
    <experiments>3</experiments>
</comment>
<comment type="interaction">
    <interactant intactId="EBI-12065614">
        <id>Q6ZT89-3</id>
    </interactant>
    <interactant intactId="EBI-11522433">
        <id>Q5JR59-3</id>
        <label>MTUS2</label>
    </interactant>
    <organismsDiffer>false</organismsDiffer>
    <experiments>3</experiments>
</comment>
<comment type="interaction">
    <interactant intactId="EBI-12065614">
        <id>Q6ZT89-3</id>
    </interactant>
    <interactant intactId="EBI-740343">
        <id>Q93062-3</id>
        <label>RBPMS</label>
    </interactant>
    <organismsDiffer>false</organismsDiffer>
    <experiments>3</experiments>
</comment>
<comment type="interaction">
    <interactant intactId="EBI-12065614">
        <id>Q6ZT89-3</id>
    </interactant>
    <interactant intactId="EBI-949753">
        <id>Q63HR2</id>
        <label>TNS2</label>
    </interactant>
    <organismsDiffer>false</organismsDiffer>
    <experiments>3</experiments>
</comment>
<comment type="subcellular location">
    <subcellularLocation>
        <location evidence="1">Mitochondrion inner membrane</location>
        <topology evidence="1">Multi-pass membrane protein</topology>
    </subcellularLocation>
</comment>
<comment type="alternative products">
    <event type="alternative splicing"/>
    <isoform>
        <id>Q6ZT89-1</id>
        <name>1</name>
        <sequence type="displayed"/>
    </isoform>
    <isoform>
        <id>Q6ZT89-2</id>
        <name>2</name>
        <sequence type="described" ref="VSP_032399"/>
    </isoform>
    <isoform>
        <id>Q6ZT89-3</id>
        <name>3</name>
        <sequence type="described" ref="VSP_032397 VSP_032398"/>
    </isoform>
</comment>
<comment type="similarity">
    <text evidence="5">Belongs to the mitochondrial carrier (TC 2.A.29) family.</text>
</comment>
<feature type="chain" id="PRO_0000325768" description="Solute carrier family 25 member 48">
    <location>
        <begin position="1"/>
        <end position="311"/>
    </location>
</feature>
<feature type="transmembrane region" description="Helical; Name=1" evidence="2">
    <location>
        <begin position="9"/>
        <end position="29"/>
    </location>
</feature>
<feature type="transmembrane region" description="Helical; Name=2" evidence="2">
    <location>
        <begin position="61"/>
        <end position="81"/>
    </location>
</feature>
<feature type="transmembrane region" description="Helical; Name=3" evidence="2">
    <location>
        <begin position="107"/>
        <end position="127"/>
    </location>
</feature>
<feature type="transmembrane region" description="Helical; Name=4" evidence="2">
    <location>
        <begin position="189"/>
        <end position="209"/>
    </location>
</feature>
<feature type="transmembrane region" description="Helical; Name=5" evidence="2">
    <location>
        <begin position="217"/>
        <end position="237"/>
    </location>
</feature>
<feature type="transmembrane region" description="Helical; Name=6" evidence="2">
    <location>
        <begin position="277"/>
        <end position="295"/>
    </location>
</feature>
<feature type="repeat" description="Solcar 1">
    <location>
        <begin position="3"/>
        <end position="86"/>
    </location>
</feature>
<feature type="repeat" description="Solcar 2">
    <location>
        <begin position="101"/>
        <end position="205"/>
    </location>
</feature>
<feature type="repeat" description="Solcar 3">
    <location>
        <begin position="214"/>
        <end position="301"/>
    </location>
</feature>
<feature type="splice variant" id="VSP_032397" description="In isoform 3." evidence="4">
    <original>ANLGLKSRAVAPAEQPA</original>
    <variation>GGEHRMTTVFPGPHLCM</variation>
    <location>
        <begin position="141"/>
        <end position="157"/>
    </location>
</feature>
<feature type="splice variant" id="VSP_032398" description="In isoform 3." evidence="4">
    <location>
        <begin position="158"/>
        <end position="311"/>
    </location>
</feature>
<feature type="splice variant" id="VSP_032399" description="In isoform 2." evidence="3">
    <original>AISWGTATPMDVVKSRLQADGVYLNKYKGVLDCISQSYQKEGLKVFFRGITVNAVRGFPMSAAMFLGYELSLQAIRGDHAVTSP</original>
    <variation>KGSSSWSRTPVQATAVGQLGNCHALLSPGGGQDTFRYSPNNSLLGTYSVPGPLPPQSHPFPMQL</variation>
    <location>
        <begin position="228"/>
        <end position="311"/>
    </location>
</feature>
<keyword id="KW-0025">Alternative splicing</keyword>
<keyword id="KW-0472">Membrane</keyword>
<keyword id="KW-0496">Mitochondrion</keyword>
<keyword id="KW-0999">Mitochondrion inner membrane</keyword>
<keyword id="KW-1267">Proteomics identification</keyword>
<keyword id="KW-1185">Reference proteome</keyword>
<keyword id="KW-0677">Repeat</keyword>
<keyword id="KW-0812">Transmembrane</keyword>
<keyword id="KW-1133">Transmembrane helix</keyword>
<keyword id="KW-0813">Transport</keyword>
<evidence type="ECO:0000250" key="1"/>
<evidence type="ECO:0000255" key="2"/>
<evidence type="ECO:0000303" key="3">
    <source>
    </source>
</evidence>
<evidence type="ECO:0000303" key="4">
    <source>
    </source>
</evidence>
<evidence type="ECO:0000305" key="5"/>
<proteinExistence type="evidence at protein level"/>
<organism>
    <name type="scientific">Homo sapiens</name>
    <name type="common">Human</name>
    <dbReference type="NCBI Taxonomy" id="9606"/>
    <lineage>
        <taxon>Eukaryota</taxon>
        <taxon>Metazoa</taxon>
        <taxon>Chordata</taxon>
        <taxon>Craniata</taxon>
        <taxon>Vertebrata</taxon>
        <taxon>Euteleostomi</taxon>
        <taxon>Mammalia</taxon>
        <taxon>Eutheria</taxon>
        <taxon>Euarchontoglires</taxon>
        <taxon>Primates</taxon>
        <taxon>Haplorrhini</taxon>
        <taxon>Catarrhini</taxon>
        <taxon>Hominidae</taxon>
        <taxon>Homo</taxon>
    </lineage>
</organism>
<dbReference type="EMBL" id="AK126812">
    <property type="protein sequence ID" value="BAC86705.1"/>
    <property type="molecule type" value="mRNA"/>
</dbReference>
<dbReference type="EMBL" id="AC011427">
    <property type="status" value="NOT_ANNOTATED_CDS"/>
    <property type="molecule type" value="Genomic_DNA"/>
</dbReference>
<dbReference type="EMBL" id="CH471062">
    <property type="protein sequence ID" value="EAW62205.1"/>
    <property type="molecule type" value="Genomic_DNA"/>
</dbReference>
<dbReference type="EMBL" id="BC025747">
    <property type="protein sequence ID" value="AAH25747.1"/>
    <property type="molecule type" value="mRNA"/>
</dbReference>
<dbReference type="CCDS" id="CCDS43366.2">
    <molecule id="Q6ZT89-3"/>
</dbReference>
<dbReference type="CCDS" id="CCDS93786.1">
    <molecule id="Q6ZT89-1"/>
</dbReference>
<dbReference type="RefSeq" id="NP_001336265.1">
    <molecule id="Q6ZT89-1"/>
    <property type="nucleotide sequence ID" value="NM_001349336.2"/>
</dbReference>
<dbReference type="RefSeq" id="NP_660325.4">
    <molecule id="Q6ZT89-3"/>
    <property type="nucleotide sequence ID" value="NM_145282.5"/>
</dbReference>
<dbReference type="RefSeq" id="XP_006714609.1">
    <property type="nucleotide sequence ID" value="XM_006714546.1"/>
</dbReference>
<dbReference type="RefSeq" id="XP_016864575.1">
    <property type="nucleotide sequence ID" value="XM_017009086.1"/>
</dbReference>
<dbReference type="RefSeq" id="XP_016864576.1">
    <molecule id="Q6ZT89-1"/>
    <property type="nucleotide sequence ID" value="XM_017009087.2"/>
</dbReference>
<dbReference type="RefSeq" id="XP_016864577.1">
    <molecule id="Q6ZT89-1"/>
    <property type="nucleotide sequence ID" value="XM_017009088.2"/>
</dbReference>
<dbReference type="RefSeq" id="XP_054207749.1">
    <molecule id="Q6ZT89-1"/>
    <property type="nucleotide sequence ID" value="XM_054351774.1"/>
</dbReference>
<dbReference type="RefSeq" id="XP_054207750.1">
    <molecule id="Q6ZT89-1"/>
    <property type="nucleotide sequence ID" value="XM_054351775.1"/>
</dbReference>
<dbReference type="SMR" id="Q6ZT89"/>
<dbReference type="BioGRID" id="127489">
    <property type="interactions" value="39"/>
</dbReference>
<dbReference type="FunCoup" id="Q6ZT89">
    <property type="interactions" value="383"/>
</dbReference>
<dbReference type="IntAct" id="Q6ZT89">
    <property type="interactions" value="31"/>
</dbReference>
<dbReference type="STRING" id="9606.ENSP00000493514"/>
<dbReference type="TCDB" id="2.A.29.8.8">
    <property type="family name" value="the mitochondrial carrier (mc) family"/>
</dbReference>
<dbReference type="iPTMnet" id="Q6ZT89"/>
<dbReference type="PhosphoSitePlus" id="Q6ZT89"/>
<dbReference type="BioMuta" id="SLC25A48"/>
<dbReference type="MassIVE" id="Q6ZT89"/>
<dbReference type="PaxDb" id="9606-ENSP00000413049"/>
<dbReference type="PeptideAtlas" id="Q6ZT89"/>
<dbReference type="ProteomicsDB" id="68263">
    <molecule id="Q6ZT89-1"/>
</dbReference>
<dbReference type="ProteomicsDB" id="68264">
    <molecule id="Q6ZT89-2"/>
</dbReference>
<dbReference type="Antibodypedia" id="7244">
    <property type="antibodies" value="33 antibodies from 11 providers"/>
</dbReference>
<dbReference type="DNASU" id="153328"/>
<dbReference type="Ensembl" id="ENST00000274513.9">
    <molecule id="Q6ZT89-2"/>
    <property type="protein sequence ID" value="ENSP00000274513.5"/>
    <property type="gene ID" value="ENSG00000145832.16"/>
</dbReference>
<dbReference type="Ensembl" id="ENST00000412661.3">
    <molecule id="Q6ZT89-3"/>
    <property type="protein sequence ID" value="ENSP00000413049.2"/>
    <property type="gene ID" value="ENSG00000145832.16"/>
</dbReference>
<dbReference type="Ensembl" id="ENST00000433282.6">
    <molecule id="Q6ZT89-1"/>
    <property type="protein sequence ID" value="ENSP00000399834.3"/>
    <property type="gene ID" value="ENSG00000145832.16"/>
</dbReference>
<dbReference type="Ensembl" id="ENST00000681962.1">
    <molecule id="Q6ZT89-1"/>
    <property type="protein sequence ID" value="ENSP00000506858.1"/>
    <property type="gene ID" value="ENSG00000145832.16"/>
</dbReference>
<dbReference type="GeneID" id="153328"/>
<dbReference type="KEGG" id="hsa:153328"/>
<dbReference type="MANE-Select" id="ENST00000681962.1">
    <property type="protein sequence ID" value="ENSP00000506858.1"/>
    <property type="RefSeq nucleotide sequence ID" value="NM_001349336.2"/>
    <property type="RefSeq protein sequence ID" value="NP_001336265.1"/>
</dbReference>
<dbReference type="UCSC" id="uc003laz.1">
    <molecule id="Q6ZT89-1"/>
    <property type="organism name" value="human"/>
</dbReference>
<dbReference type="AGR" id="HGNC:30451"/>
<dbReference type="CTD" id="153328"/>
<dbReference type="DisGeNET" id="153328"/>
<dbReference type="GeneCards" id="SLC25A48"/>
<dbReference type="HGNC" id="HGNC:30451">
    <property type="gene designation" value="SLC25A48"/>
</dbReference>
<dbReference type="HPA" id="ENSG00000145832">
    <property type="expression patterns" value="Tissue enhanced (brain, kidney, skeletal muscle)"/>
</dbReference>
<dbReference type="MIM" id="616150">
    <property type="type" value="gene"/>
</dbReference>
<dbReference type="neXtProt" id="NX_Q6ZT89"/>
<dbReference type="OpenTargets" id="ENSG00000145832"/>
<dbReference type="PharmGKB" id="PA165660536"/>
<dbReference type="VEuPathDB" id="HostDB:ENSG00000145832"/>
<dbReference type="eggNOG" id="KOG0758">
    <property type="taxonomic scope" value="Eukaryota"/>
</dbReference>
<dbReference type="GeneTree" id="ENSGT00940000159354"/>
<dbReference type="HOGENOM" id="CLU_015166_11_2_1"/>
<dbReference type="InParanoid" id="Q6ZT89"/>
<dbReference type="OMA" id="VWFLAFE"/>
<dbReference type="OrthoDB" id="193856at2759"/>
<dbReference type="PAN-GO" id="Q6ZT89">
    <property type="GO annotations" value="3 GO annotations based on evolutionary models"/>
</dbReference>
<dbReference type="PhylomeDB" id="Q6ZT89"/>
<dbReference type="TreeFam" id="TF351739"/>
<dbReference type="PathwayCommons" id="Q6ZT89"/>
<dbReference type="SignaLink" id="Q6ZT89"/>
<dbReference type="BioGRID-ORCS" id="153328">
    <property type="hits" value="28 hits in 1142 CRISPR screens"/>
</dbReference>
<dbReference type="ChiTaRS" id="SLC25A48">
    <property type="organism name" value="human"/>
</dbReference>
<dbReference type="GenomeRNAi" id="153328"/>
<dbReference type="Pharos" id="Q6ZT89">
    <property type="development level" value="Tdark"/>
</dbReference>
<dbReference type="PRO" id="PR:Q6ZT89"/>
<dbReference type="Proteomes" id="UP000005640">
    <property type="component" value="Chromosome 5"/>
</dbReference>
<dbReference type="RNAct" id="Q6ZT89">
    <property type="molecule type" value="protein"/>
</dbReference>
<dbReference type="Bgee" id="ENSG00000145832">
    <property type="expression patterns" value="Expressed in tibial nerve and 115 other cell types or tissues"/>
</dbReference>
<dbReference type="ExpressionAtlas" id="Q6ZT89">
    <property type="expression patterns" value="baseline and differential"/>
</dbReference>
<dbReference type="GO" id="GO:0005743">
    <property type="term" value="C:mitochondrial inner membrane"/>
    <property type="evidence" value="ECO:0007669"/>
    <property type="project" value="UniProtKB-SubCell"/>
</dbReference>
<dbReference type="GO" id="GO:0005739">
    <property type="term" value="C:mitochondrion"/>
    <property type="evidence" value="ECO:0000318"/>
    <property type="project" value="GO_Central"/>
</dbReference>
<dbReference type="GO" id="GO:0022857">
    <property type="term" value="F:transmembrane transporter activity"/>
    <property type="evidence" value="ECO:0000318"/>
    <property type="project" value="GO_Central"/>
</dbReference>
<dbReference type="FunFam" id="1.50.40.10:FF:000058">
    <property type="entry name" value="Solute carrier family 25 member 48"/>
    <property type="match status" value="1"/>
</dbReference>
<dbReference type="Gene3D" id="1.50.40.10">
    <property type="entry name" value="Mitochondrial carrier domain"/>
    <property type="match status" value="1"/>
</dbReference>
<dbReference type="InterPro" id="IPR002067">
    <property type="entry name" value="Mit_carrier"/>
</dbReference>
<dbReference type="InterPro" id="IPR050567">
    <property type="entry name" value="Mitochondrial_Carrier"/>
</dbReference>
<dbReference type="InterPro" id="IPR018108">
    <property type="entry name" value="Mitochondrial_sb/sol_carrier"/>
</dbReference>
<dbReference type="InterPro" id="IPR023395">
    <property type="entry name" value="Mt_carrier_dom_sf"/>
</dbReference>
<dbReference type="PANTHER" id="PTHR45624">
    <property type="entry name" value="MITOCHONDRIAL BASIC AMINO ACIDS TRANSPORTER-RELATED"/>
    <property type="match status" value="1"/>
</dbReference>
<dbReference type="PANTHER" id="PTHR45624:SF7">
    <property type="entry name" value="SOLUTE CARRIER FAMILY 25 MEMBER 48"/>
    <property type="match status" value="1"/>
</dbReference>
<dbReference type="Pfam" id="PF00153">
    <property type="entry name" value="Mito_carr"/>
    <property type="match status" value="3"/>
</dbReference>
<dbReference type="PRINTS" id="PR00926">
    <property type="entry name" value="MITOCARRIER"/>
</dbReference>
<dbReference type="SUPFAM" id="SSF103506">
    <property type="entry name" value="Mitochondrial carrier"/>
    <property type="match status" value="1"/>
</dbReference>
<dbReference type="PROSITE" id="PS50920">
    <property type="entry name" value="SOLCAR"/>
    <property type="match status" value="3"/>
</dbReference>
<sequence>MGSFQLEDFAAGWIGGAASVIVGHPLDTVKTRLQAGVGYGNTLSCIRVVYRRESMFGFFKGMSFPLASIAVYNSVVFGVFSNTQRFLSQHRCGEPEASPPRTLSDLLLASMVAGVVSVGLGGPVDLIKIRLQMQTQPFRDANLGLKSRAVAPAEQPAYQGPVHCITTIVRNEGLAGLYRGASAMLLRDVPGYCLYFIPYVFLSEWITPEACTGPSPCAVWLAGGMAGAISWGTATPMDVVKSRLQADGVYLNKYKGVLDCISQSYQKEGLKVFFRGITVNAVRGFPMSAAMFLGYELSLQAIRGDHAVTSP</sequence>